<reference key="1">
    <citation type="journal article" date="2006" name="Nature">
        <title>Deciphering the evolution and metabolism of an anammox bacterium from a community genome.</title>
        <authorList>
            <person name="Strous M."/>
            <person name="Pelletier E."/>
            <person name="Mangenot S."/>
            <person name="Rattei T."/>
            <person name="Lehner A."/>
            <person name="Taylor M.W."/>
            <person name="Horn M."/>
            <person name="Daims H."/>
            <person name="Bartol-Mavel D."/>
            <person name="Wincker P."/>
            <person name="Barbe V."/>
            <person name="Fonknechten N."/>
            <person name="Vallenet D."/>
            <person name="Segurens B."/>
            <person name="Schenowitz-Truong C."/>
            <person name="Medigue C."/>
            <person name="Collingro A."/>
            <person name="Snel B."/>
            <person name="Dutilh B.E."/>
            <person name="Op den Camp H.J."/>
            <person name="van der Drift C."/>
            <person name="Cirpus I."/>
            <person name="van de Pas-Schoonen K.T."/>
            <person name="Harhangi H.R."/>
            <person name="van Niftrik L."/>
            <person name="Schmid M."/>
            <person name="Keltjens J."/>
            <person name="van de Vossenberg J."/>
            <person name="Kartal B."/>
            <person name="Meier H."/>
            <person name="Frishman D."/>
            <person name="Huynen M.A."/>
            <person name="Mewes H."/>
            <person name="Weissenbach J."/>
            <person name="Jetten M.S.M."/>
            <person name="Wagner M."/>
            <person name="Le Paslier D."/>
        </authorList>
    </citation>
    <scope>NUCLEOTIDE SEQUENCE [LARGE SCALE GENOMIC DNA]</scope>
</reference>
<reference key="2">
    <citation type="journal article" date="2011" name="Nature">
        <title>Molecular mechanism of anaerobic ammonium oxidation.</title>
        <authorList>
            <person name="Kartal B."/>
            <person name="Maalcke W.J."/>
            <person name="de Almeida N.M."/>
            <person name="Cirpus I."/>
            <person name="Gloerich J."/>
            <person name="Geerts W."/>
            <person name="Op den Camp H.J."/>
            <person name="Harhangi H.R."/>
            <person name="Janssen-Megens E.M."/>
            <person name="Francoijs K.J."/>
            <person name="Stunnenberg H.G."/>
            <person name="Keltjens J.T."/>
            <person name="Jetten M.S."/>
            <person name="Strous M."/>
        </authorList>
    </citation>
    <scope>FUNCTION</scope>
    <scope>CATALYTIC ACTIVITY</scope>
    <scope>SUBCELLULAR LOCATION</scope>
    <scope>PATHWAY</scope>
    <scope>INDUCTION</scope>
</reference>
<reference evidence="8 9" key="3">
    <citation type="journal article" date="2015" name="Nature">
        <title>The inner workings of the hydrazine synthase multiprotein complex.</title>
        <authorList>
            <person name="Dietl A."/>
            <person name="Ferousi C."/>
            <person name="Maalcke W.J."/>
            <person name="Menzel A."/>
            <person name="de Vries S."/>
            <person name="Keltjens J.T."/>
            <person name="Jetten M.S."/>
            <person name="Kartal B."/>
            <person name="Barends T.R."/>
        </authorList>
    </citation>
    <scope>X-RAY CRYSTALLOGRAPHY (2.70 ANGSTROMS) OF 40-353 IN COMPLEX WITH OTHER SUBUNITS OF THE HYDRAZINE SYNTHASE COMPLEX; HEMES AND CALCIUM IONS</scope>
    <scope>COFACTOR</scope>
    <scope>FUNCTION</scope>
    <scope>DOMAIN</scope>
    <scope>REACTION MECHANISM</scope>
</reference>
<name>HZSG_KUEST</name>
<proteinExistence type="evidence at protein level"/>
<sequence>MAREMRLGGKERMKTGVVKIGLVAALGVVGLISAGGVYAGQPRVISTIQTGATWEPLGREEPLTVPEVHFRVKHSPFKSELVRYGQFQFNDAAWSLQGSYSCASCHYERGQTTGLIWDLGDEGWGSWKNTKYIRGGRYLPPFRHEGFTGHPDEIVGATSSLDRVCGRDPGFVFRSENFSPMRLEALICYIRALEFTGSPFRNADGSLTEAQKRGQKIFEDPKVGCLECHPGDPMDPRALFSDAQTHDVGTGRVGVNGFRSTPGKVFNISALEAGEDPYGVESNTPIIGLDLVKEFDTPTLRDIYASGTYFHDGGARTLMDTINNTVNDKDMHGRTSHLKQQELQDLVEYLKAL</sequence>
<gene>
    <name evidence="7" type="ORF">kuste2860</name>
</gene>
<comment type="function">
    <text evidence="3 4">Component of the hydrazine synthase complex that catalyzes the condensation of nitric oxide (NO) with ammonium to form hydrazine (PubMed:21964329). The gamma subunit catalyzes the first half-reaction, i.e. the three-electron reduction of nitric oxide to hydroxylamine; it may obtain electrons from the triheme cytochrome c kuste2854 (PubMed:26479033). Is involved in anaerobic ammonium oxidation (anammox), a biological process in which nitrite is used as the electron acceptor in the conversion of ammonium to dinitrogen gas (N2) and water; this bacterial process has a major role in the Earth's nitrogen cycle and has been estimated to synthesize up to 50% of the dinitrogen gas emitted into our atmosphere from the oceans (PubMed:21964329, PubMed:26479033).</text>
</comment>
<comment type="catalytic activity">
    <reaction evidence="3">
        <text>hydrazine + 3 Fe(III)-[cytochrome c] + H2O = nitric oxide + 3 Fe(II)-[cytochrome c] + NH4(+) + 2 H(+)</text>
        <dbReference type="Rhea" id="RHEA:49816"/>
        <dbReference type="Rhea" id="RHEA-COMP:10350"/>
        <dbReference type="Rhea" id="RHEA-COMP:14399"/>
        <dbReference type="ChEBI" id="CHEBI:15377"/>
        <dbReference type="ChEBI" id="CHEBI:15378"/>
        <dbReference type="ChEBI" id="CHEBI:15571"/>
        <dbReference type="ChEBI" id="CHEBI:16480"/>
        <dbReference type="ChEBI" id="CHEBI:28938"/>
        <dbReference type="ChEBI" id="CHEBI:29033"/>
        <dbReference type="ChEBI" id="CHEBI:29034"/>
        <dbReference type="EC" id="1.7.2.7"/>
    </reaction>
</comment>
<comment type="cofactor">
    <cofactor evidence="4">
        <name>heme c</name>
        <dbReference type="ChEBI" id="CHEBI:61717"/>
    </cofactor>
    <text evidence="4">Binds two heme c groups per subunit. Heme 1 appears to be in the active site, whereas heme 2 probably functions in electron transfer.</text>
</comment>
<comment type="pathway">
    <text evidence="3">Nitrogen metabolism.</text>
</comment>
<comment type="subunit">
    <text evidence="4">Part of the hydrazine synthase complex that forms an elongated dimer of heterotrimers composed of one alpha, one beta and one gamma subunit.</text>
</comment>
<comment type="subcellular location">
    <subcellularLocation>
        <location evidence="6">Anammoxosome</location>
    </subcellularLocation>
</comment>
<comment type="induction">
    <text evidence="3">Is among the most highly expressed proteins in the proteome.</text>
</comment>
<comment type="domain">
    <text evidence="4">Consists of two alpha-helical lobes, each of which contains one c-type heme.</text>
</comment>
<accession>Q1Q0T3</accession>
<organism>
    <name type="scientific">Kuenenia stuttgartiensis</name>
    <dbReference type="NCBI Taxonomy" id="174633"/>
    <lineage>
        <taxon>Bacteria</taxon>
        <taxon>Pseudomonadati</taxon>
        <taxon>Planctomycetota</taxon>
        <taxon>Candidatus Brocadiia</taxon>
        <taxon>Candidatus Brocadiales</taxon>
        <taxon>Candidatus Brocadiaceae</taxon>
        <taxon>Candidatus Kuenenia</taxon>
    </lineage>
</organism>
<keyword id="KW-0002">3D-structure</keyword>
<keyword id="KW-0106">Calcium</keyword>
<keyword id="KW-0349">Heme</keyword>
<keyword id="KW-0408">Iron</keyword>
<keyword id="KW-0479">Metal-binding</keyword>
<keyword id="KW-0560">Oxidoreductase</keyword>
<keyword id="KW-0732">Signal</keyword>
<protein>
    <recommendedName>
        <fullName evidence="5">Hydrazine synthase subunit gamma</fullName>
        <shortName evidence="5">HZS-gamma</shortName>
        <ecNumber evidence="3">1.7.2.7</ecNumber>
    </recommendedName>
</protein>
<feature type="signal peptide" evidence="1">
    <location>
        <begin position="1"/>
        <end position="39"/>
    </location>
</feature>
<feature type="chain" id="PRO_0000441262" description="Hydrazine synthase subunit gamma">
    <location>
        <begin position="40"/>
        <end position="353"/>
    </location>
</feature>
<feature type="domain" description="Cytochrome c" evidence="2">
    <location>
        <begin position="209"/>
        <end position="353"/>
    </location>
</feature>
<feature type="binding site" description="covalent" evidence="4 8 9">
    <location>
        <position position="102"/>
    </location>
    <ligand>
        <name>heme c</name>
        <dbReference type="ChEBI" id="CHEBI:61717"/>
        <label>1</label>
    </ligand>
</feature>
<feature type="binding site" description="covalent" evidence="4 8 9">
    <location>
        <position position="105"/>
    </location>
    <ligand>
        <name>heme c</name>
        <dbReference type="ChEBI" id="CHEBI:61717"/>
        <label>1</label>
    </ligand>
</feature>
<feature type="binding site" description="axial binding residue" evidence="4 8 9">
    <location>
        <position position="106"/>
    </location>
    <ligand>
        <name>heme c</name>
        <dbReference type="ChEBI" id="CHEBI:61717"/>
        <label>1</label>
    </ligand>
    <ligandPart>
        <name>Fe</name>
        <dbReference type="ChEBI" id="CHEBI:18248"/>
    </ligandPart>
</feature>
<feature type="binding site" evidence="4 8 9">
    <location>
        <position position="118"/>
    </location>
    <ligand>
        <name>Ca(2+)</name>
        <dbReference type="ChEBI" id="CHEBI:29108"/>
        <label>1</label>
    </ligand>
</feature>
<feature type="binding site" evidence="4 8 9">
    <location>
        <position position="119"/>
    </location>
    <ligand>
        <name>Ca(2+)</name>
        <dbReference type="ChEBI" id="CHEBI:29108"/>
        <label>1</label>
    </ligand>
</feature>
<feature type="binding site" evidence="4 8 9">
    <location>
        <position position="122"/>
    </location>
    <ligand>
        <name>Ca(2+)</name>
        <dbReference type="ChEBI" id="CHEBI:29108"/>
        <label>1</label>
    </ligand>
</feature>
<feature type="binding site" evidence="4 8 9">
    <location>
        <position position="123"/>
    </location>
    <ligand>
        <name>Ca(2+)</name>
        <dbReference type="ChEBI" id="CHEBI:29108"/>
        <label>1</label>
    </ligand>
</feature>
<feature type="binding site" evidence="4 8 9">
    <location>
        <position position="126"/>
    </location>
    <ligand>
        <name>Ca(2+)</name>
        <dbReference type="ChEBI" id="CHEBI:29108"/>
        <label>1</label>
    </ligand>
</feature>
<feature type="binding site" evidence="4 8 9">
    <location>
        <position position="129"/>
    </location>
    <ligand>
        <name>Ca(2+)</name>
        <dbReference type="ChEBI" id="CHEBI:29108"/>
        <label>2</label>
    </ligand>
</feature>
<feature type="binding site" evidence="4 8 9">
    <location>
        <position position="139"/>
    </location>
    <ligand>
        <name>Ca(2+)</name>
        <dbReference type="ChEBI" id="CHEBI:29108"/>
        <label>3</label>
    </ligand>
</feature>
<feature type="binding site" evidence="4 8 9">
    <location>
        <position position="141"/>
    </location>
    <ligand>
        <name>Ca(2+)</name>
        <dbReference type="ChEBI" id="CHEBI:29108"/>
        <label>3</label>
    </ligand>
</feature>
<feature type="binding site" description="covalent" evidence="4 8 9">
    <location>
        <position position="165"/>
    </location>
    <ligand>
        <name>heme c</name>
        <dbReference type="ChEBI" id="CHEBI:61717"/>
        <label>1</label>
    </ligand>
</feature>
<feature type="binding site" description="covalent" evidence="4 8 9">
    <location>
        <position position="225"/>
    </location>
    <ligand>
        <name>heme c</name>
        <dbReference type="ChEBI" id="CHEBI:61717"/>
        <label>2</label>
    </ligand>
</feature>
<feature type="binding site" description="covalent" evidence="4 8 9">
    <location>
        <position position="228"/>
    </location>
    <ligand>
        <name>heme c</name>
        <dbReference type="ChEBI" id="CHEBI:61717"/>
        <label>2</label>
    </ligand>
</feature>
<feature type="binding site" description="axial binding residue" evidence="4 8 9">
    <location>
        <position position="229"/>
    </location>
    <ligand>
        <name>heme c</name>
        <dbReference type="ChEBI" id="CHEBI:61717"/>
        <label>2</label>
    </ligand>
    <ligandPart>
        <name>Fe</name>
        <dbReference type="ChEBI" id="CHEBI:18248"/>
    </ligandPart>
</feature>
<feature type="binding site" evidence="4 8 9">
    <location>
        <position position="296"/>
    </location>
    <ligand>
        <name>Ca(2+)</name>
        <dbReference type="ChEBI" id="CHEBI:29108"/>
        <label>3</label>
    </ligand>
</feature>
<feature type="binding site" evidence="4 8 9">
    <location>
        <position position="306"/>
    </location>
    <ligand>
        <name>Ca(2+)</name>
        <dbReference type="ChEBI" id="CHEBI:29108"/>
        <label>2</label>
    </ligand>
</feature>
<feature type="binding site" evidence="4 8 9">
    <location>
        <position position="307"/>
    </location>
    <ligand>
        <name>Ca(2+)</name>
        <dbReference type="ChEBI" id="CHEBI:29108"/>
        <label>2</label>
    </ligand>
</feature>
<feature type="binding site" evidence="4 8 9">
    <location>
        <position position="308"/>
    </location>
    <ligand>
        <name>Ca(2+)</name>
        <dbReference type="ChEBI" id="CHEBI:29108"/>
        <label>2</label>
    </ligand>
</feature>
<feature type="binding site" description="axial binding residue" evidence="4 8 9">
    <location>
        <position position="332"/>
    </location>
    <ligand>
        <name>heme c</name>
        <dbReference type="ChEBI" id="CHEBI:61717"/>
        <label>2</label>
    </ligand>
    <ligandPart>
        <name>Fe</name>
        <dbReference type="ChEBI" id="CHEBI:18248"/>
    </ligandPart>
</feature>
<feature type="strand" evidence="10">
    <location>
        <begin position="43"/>
        <end position="49"/>
    </location>
</feature>
<feature type="helix" evidence="10">
    <location>
        <begin position="65"/>
        <end position="69"/>
    </location>
</feature>
<feature type="helix" evidence="10">
    <location>
        <begin position="82"/>
        <end position="90"/>
    </location>
</feature>
<feature type="strand" evidence="10">
    <location>
        <begin position="95"/>
        <end position="98"/>
    </location>
</feature>
<feature type="helix" evidence="10">
    <location>
        <begin position="102"/>
        <end position="104"/>
    </location>
</feature>
<feature type="turn" evidence="10">
    <location>
        <begin position="107"/>
        <end position="110"/>
    </location>
</feature>
<feature type="strand" evidence="10">
    <location>
        <begin position="116"/>
        <end position="118"/>
    </location>
</feature>
<feature type="strand" evidence="10">
    <location>
        <begin position="120"/>
        <end position="122"/>
    </location>
</feature>
<feature type="strand" evidence="10">
    <location>
        <begin position="141"/>
        <end position="145"/>
    </location>
</feature>
<feature type="strand" evidence="10">
    <location>
        <begin position="151"/>
        <end position="159"/>
    </location>
</feature>
<feature type="helix" evidence="10">
    <location>
        <begin position="162"/>
        <end position="165"/>
    </location>
</feature>
<feature type="helix" evidence="10">
    <location>
        <begin position="168"/>
        <end position="171"/>
    </location>
</feature>
<feature type="helix" evidence="10">
    <location>
        <begin position="180"/>
        <end position="191"/>
    </location>
</feature>
<feature type="helix" evidence="10">
    <location>
        <begin position="209"/>
        <end position="218"/>
    </location>
</feature>
<feature type="turn" evidence="10">
    <location>
        <begin position="221"/>
        <end position="223"/>
    </location>
</feature>
<feature type="turn" evidence="10">
    <location>
        <begin position="226"/>
        <end position="228"/>
    </location>
</feature>
<feature type="strand" evidence="10">
    <location>
        <begin position="261"/>
        <end position="263"/>
    </location>
</feature>
<feature type="helix" evidence="10">
    <location>
        <begin position="268"/>
        <end position="273"/>
    </location>
</feature>
<feature type="turn" evidence="10">
    <location>
        <begin position="301"/>
        <end position="304"/>
    </location>
</feature>
<feature type="strand" evidence="10">
    <location>
        <begin position="307"/>
        <end position="313"/>
    </location>
</feature>
<feature type="strand" evidence="10">
    <location>
        <begin position="315"/>
        <end position="317"/>
    </location>
</feature>
<feature type="helix" evidence="10">
    <location>
        <begin position="318"/>
        <end position="321"/>
    </location>
</feature>
<feature type="turn" evidence="10">
    <location>
        <begin position="322"/>
        <end position="324"/>
    </location>
</feature>
<feature type="strand" evidence="10">
    <location>
        <begin position="325"/>
        <end position="327"/>
    </location>
</feature>
<feature type="turn" evidence="10">
    <location>
        <begin position="329"/>
        <end position="331"/>
    </location>
</feature>
<feature type="helix" evidence="10">
    <location>
        <begin position="340"/>
        <end position="351"/>
    </location>
</feature>
<dbReference type="EC" id="1.7.2.7" evidence="3"/>
<dbReference type="EMBL" id="CT573071">
    <property type="protein sequence ID" value="CAJ73612.1"/>
    <property type="molecule type" value="Genomic_DNA"/>
</dbReference>
<dbReference type="PDB" id="5C2V">
    <property type="method" value="X-ray"/>
    <property type="resolution" value="2.70 A"/>
    <property type="chains" value="C/F=40-353"/>
</dbReference>
<dbReference type="PDB" id="5C2W">
    <property type="method" value="X-ray"/>
    <property type="resolution" value="3.20 A"/>
    <property type="chains" value="C/F=40-353"/>
</dbReference>
<dbReference type="PDBsum" id="5C2V"/>
<dbReference type="PDBsum" id="5C2W"/>
<dbReference type="SMR" id="Q1Q0T3"/>
<dbReference type="DIP" id="DIP-61793N"/>
<dbReference type="IntAct" id="Q1Q0T3">
    <property type="interactions" value="1"/>
</dbReference>
<dbReference type="KEGG" id="ag:CAJ73612"/>
<dbReference type="BioCyc" id="MetaCyc:MONOMER-15347"/>
<dbReference type="EvolutionaryTrace" id="Q1Q0T3"/>
<dbReference type="GO" id="GO:0044222">
    <property type="term" value="C:anammoxosome"/>
    <property type="evidence" value="ECO:0000314"/>
    <property type="project" value="CACAO"/>
</dbReference>
<dbReference type="GO" id="GO:0004130">
    <property type="term" value="F:cytochrome-c peroxidase activity"/>
    <property type="evidence" value="ECO:0007669"/>
    <property type="project" value="TreeGrafter"/>
</dbReference>
<dbReference type="GO" id="GO:0009055">
    <property type="term" value="F:electron transfer activity"/>
    <property type="evidence" value="ECO:0007669"/>
    <property type="project" value="InterPro"/>
</dbReference>
<dbReference type="GO" id="GO:0020037">
    <property type="term" value="F:heme binding"/>
    <property type="evidence" value="ECO:0007669"/>
    <property type="project" value="InterPro"/>
</dbReference>
<dbReference type="GO" id="GO:0046872">
    <property type="term" value="F:metal ion binding"/>
    <property type="evidence" value="ECO:0007669"/>
    <property type="project" value="UniProtKB-KW"/>
</dbReference>
<dbReference type="FunFam" id="1.10.760.10:FF:000047">
    <property type="entry name" value="Hydrazine synthase subunit gamma"/>
    <property type="match status" value="1"/>
</dbReference>
<dbReference type="Gene3D" id="1.10.760.10">
    <property type="entry name" value="Cytochrome c-like domain"/>
    <property type="match status" value="2"/>
</dbReference>
<dbReference type="InterPro" id="IPR009056">
    <property type="entry name" value="Cyt_c-like_dom"/>
</dbReference>
<dbReference type="InterPro" id="IPR036909">
    <property type="entry name" value="Cyt_c-like_dom_sf"/>
</dbReference>
<dbReference type="InterPro" id="IPR051395">
    <property type="entry name" value="Cytochrome_c_Peroxidase/MauG"/>
</dbReference>
<dbReference type="PANTHER" id="PTHR30600:SF10">
    <property type="entry name" value="BLL6722 PROTEIN"/>
    <property type="match status" value="1"/>
</dbReference>
<dbReference type="PANTHER" id="PTHR30600">
    <property type="entry name" value="CYTOCHROME C PEROXIDASE-RELATED"/>
    <property type="match status" value="1"/>
</dbReference>
<dbReference type="SUPFAM" id="SSF46626">
    <property type="entry name" value="Cytochrome c"/>
    <property type="match status" value="2"/>
</dbReference>
<dbReference type="PROSITE" id="PS51007">
    <property type="entry name" value="CYTC"/>
    <property type="match status" value="1"/>
</dbReference>
<evidence type="ECO:0000255" key="1"/>
<evidence type="ECO:0000255" key="2">
    <source>
        <dbReference type="PROSITE-ProRule" id="PRU00433"/>
    </source>
</evidence>
<evidence type="ECO:0000269" key="3">
    <source>
    </source>
</evidence>
<evidence type="ECO:0000269" key="4">
    <source>
    </source>
</evidence>
<evidence type="ECO:0000303" key="5">
    <source>
    </source>
</evidence>
<evidence type="ECO:0000305" key="6">
    <source>
    </source>
</evidence>
<evidence type="ECO:0000312" key="7">
    <source>
        <dbReference type="EMBL" id="CAJ73612.1"/>
    </source>
</evidence>
<evidence type="ECO:0007744" key="8">
    <source>
        <dbReference type="PDB" id="5C2V"/>
    </source>
</evidence>
<evidence type="ECO:0007744" key="9">
    <source>
        <dbReference type="PDB" id="5C2W"/>
    </source>
</evidence>
<evidence type="ECO:0007829" key="10">
    <source>
        <dbReference type="PDB" id="5C2V"/>
    </source>
</evidence>